<name>FLIW_PSELT</name>
<gene>
    <name evidence="1" type="primary">fliW</name>
    <name type="ordered locus">Tlet_0670</name>
</gene>
<dbReference type="EMBL" id="CP000812">
    <property type="protein sequence ID" value="ABV33236.1"/>
    <property type="molecule type" value="Genomic_DNA"/>
</dbReference>
<dbReference type="RefSeq" id="WP_012002717.1">
    <property type="nucleotide sequence ID" value="NZ_BSDV01000001.1"/>
</dbReference>
<dbReference type="SMR" id="A8F502"/>
<dbReference type="STRING" id="416591.Tlet_0670"/>
<dbReference type="KEGG" id="tle:Tlet_0670"/>
<dbReference type="eggNOG" id="COG1699">
    <property type="taxonomic scope" value="Bacteria"/>
</dbReference>
<dbReference type="HOGENOM" id="CLU_112356_0_2_0"/>
<dbReference type="OrthoDB" id="9801235at2"/>
<dbReference type="Proteomes" id="UP000002016">
    <property type="component" value="Chromosome"/>
</dbReference>
<dbReference type="GO" id="GO:0005737">
    <property type="term" value="C:cytoplasm"/>
    <property type="evidence" value="ECO:0007669"/>
    <property type="project" value="UniProtKB-SubCell"/>
</dbReference>
<dbReference type="GO" id="GO:0044780">
    <property type="term" value="P:bacterial-type flagellum assembly"/>
    <property type="evidence" value="ECO:0007669"/>
    <property type="project" value="UniProtKB-UniRule"/>
</dbReference>
<dbReference type="GO" id="GO:0006417">
    <property type="term" value="P:regulation of translation"/>
    <property type="evidence" value="ECO:0007669"/>
    <property type="project" value="UniProtKB-KW"/>
</dbReference>
<dbReference type="Gene3D" id="2.30.290.10">
    <property type="entry name" value="BH3618-like"/>
    <property type="match status" value="1"/>
</dbReference>
<dbReference type="HAMAP" id="MF_01185">
    <property type="entry name" value="FliW"/>
    <property type="match status" value="1"/>
</dbReference>
<dbReference type="InterPro" id="IPR003775">
    <property type="entry name" value="Flagellar_assembly_factor_FliW"/>
</dbReference>
<dbReference type="InterPro" id="IPR024046">
    <property type="entry name" value="Flagellar_assmbl_FliW_dom_sf"/>
</dbReference>
<dbReference type="NCBIfam" id="NF009793">
    <property type="entry name" value="PRK13285.1-1"/>
    <property type="match status" value="1"/>
</dbReference>
<dbReference type="PANTHER" id="PTHR39190">
    <property type="entry name" value="FLAGELLAR ASSEMBLY FACTOR FLIW"/>
    <property type="match status" value="1"/>
</dbReference>
<dbReference type="PANTHER" id="PTHR39190:SF1">
    <property type="entry name" value="FLAGELLAR ASSEMBLY FACTOR FLIW"/>
    <property type="match status" value="1"/>
</dbReference>
<dbReference type="Pfam" id="PF02623">
    <property type="entry name" value="FliW"/>
    <property type="match status" value="1"/>
</dbReference>
<dbReference type="SUPFAM" id="SSF141457">
    <property type="entry name" value="BH3618-like"/>
    <property type="match status" value="1"/>
</dbReference>
<feature type="chain" id="PRO_1000065822" description="Flagellar assembly factor FliW">
    <location>
        <begin position="1"/>
        <end position="156"/>
    </location>
</feature>
<comment type="function">
    <text evidence="1">Acts as an anti-CsrA protein, binds CsrA and prevents it from repressing translation of its target genes, one of which is flagellin. Binds to flagellin and participates in the assembly of the flagellum.</text>
</comment>
<comment type="subunit">
    <text evidence="1">Interacts with translational regulator CsrA and flagellin(s).</text>
</comment>
<comment type="subcellular location">
    <subcellularLocation>
        <location evidence="1">Cytoplasm</location>
    </subcellularLocation>
</comment>
<comment type="similarity">
    <text evidence="1">Belongs to the FliW family.</text>
</comment>
<sequence>MIYKTKLGEIDIRDEDILYFNEGIPGFTHLRKFALIPIQNQPIQWLTSIEDPFVALPVVDPWLVCIDYSLTLTDEDIQDLDIKDKNDVGILSILTIPKGCPEKTTINLLAPIVINLKNRKAKQIIQENSSYSVKHLVKDEIERSQSLLKKSKTGSE</sequence>
<protein>
    <recommendedName>
        <fullName evidence="1">Flagellar assembly factor FliW</fullName>
    </recommendedName>
</protein>
<reference key="1">
    <citation type="submission" date="2007-08" db="EMBL/GenBank/DDBJ databases">
        <title>Complete sequence of Thermotoga lettingae TMO.</title>
        <authorList>
            <consortium name="US DOE Joint Genome Institute"/>
            <person name="Copeland A."/>
            <person name="Lucas S."/>
            <person name="Lapidus A."/>
            <person name="Barry K."/>
            <person name="Glavina del Rio T."/>
            <person name="Dalin E."/>
            <person name="Tice H."/>
            <person name="Pitluck S."/>
            <person name="Foster B."/>
            <person name="Bruce D."/>
            <person name="Schmutz J."/>
            <person name="Larimer F."/>
            <person name="Land M."/>
            <person name="Hauser L."/>
            <person name="Kyrpides N."/>
            <person name="Mikhailova N."/>
            <person name="Nelson K."/>
            <person name="Gogarten J.P."/>
            <person name="Noll K."/>
            <person name="Richardson P."/>
        </authorList>
    </citation>
    <scope>NUCLEOTIDE SEQUENCE [LARGE SCALE GENOMIC DNA]</scope>
    <source>
        <strain>ATCC BAA-301 / DSM 14385 / NBRC 107922 / TMO</strain>
    </source>
</reference>
<proteinExistence type="inferred from homology"/>
<accession>A8F502</accession>
<evidence type="ECO:0000255" key="1">
    <source>
        <dbReference type="HAMAP-Rule" id="MF_01185"/>
    </source>
</evidence>
<keyword id="KW-1005">Bacterial flagellum biogenesis</keyword>
<keyword id="KW-0143">Chaperone</keyword>
<keyword id="KW-0963">Cytoplasm</keyword>
<keyword id="KW-1185">Reference proteome</keyword>
<keyword id="KW-0810">Translation regulation</keyword>
<organism>
    <name type="scientific">Pseudothermotoga lettingae (strain ATCC BAA-301 / DSM 14385 / NBRC 107922 / TMO)</name>
    <name type="common">Thermotoga lettingae</name>
    <dbReference type="NCBI Taxonomy" id="416591"/>
    <lineage>
        <taxon>Bacteria</taxon>
        <taxon>Thermotogati</taxon>
        <taxon>Thermotogota</taxon>
        <taxon>Thermotogae</taxon>
        <taxon>Thermotogales</taxon>
        <taxon>Thermotogaceae</taxon>
        <taxon>Pseudothermotoga</taxon>
    </lineage>
</organism>